<proteinExistence type="inferred from homology"/>
<keyword id="KW-1185">Reference proteome</keyword>
<accession>Q5E7A0</accession>
<name>Y601_ALIF1</name>
<protein>
    <recommendedName>
        <fullName evidence="1">UPF0178 protein VF_0601</fullName>
    </recommendedName>
</protein>
<organism>
    <name type="scientific">Aliivibrio fischeri (strain ATCC 700601 / ES114)</name>
    <name type="common">Vibrio fischeri</name>
    <dbReference type="NCBI Taxonomy" id="312309"/>
    <lineage>
        <taxon>Bacteria</taxon>
        <taxon>Pseudomonadati</taxon>
        <taxon>Pseudomonadota</taxon>
        <taxon>Gammaproteobacteria</taxon>
        <taxon>Vibrionales</taxon>
        <taxon>Vibrionaceae</taxon>
        <taxon>Aliivibrio</taxon>
    </lineage>
</organism>
<reference key="1">
    <citation type="journal article" date="2005" name="Proc. Natl. Acad. Sci. U.S.A.">
        <title>Complete genome sequence of Vibrio fischeri: a symbiotic bacterium with pathogenic congeners.</title>
        <authorList>
            <person name="Ruby E.G."/>
            <person name="Urbanowski M."/>
            <person name="Campbell J."/>
            <person name="Dunn A."/>
            <person name="Faini M."/>
            <person name="Gunsalus R."/>
            <person name="Lostroh P."/>
            <person name="Lupp C."/>
            <person name="McCann J."/>
            <person name="Millikan D."/>
            <person name="Schaefer A."/>
            <person name="Stabb E."/>
            <person name="Stevens A."/>
            <person name="Visick K."/>
            <person name="Whistler C."/>
            <person name="Greenberg E.P."/>
        </authorList>
    </citation>
    <scope>NUCLEOTIDE SEQUENCE [LARGE SCALE GENOMIC DNA]</scope>
    <source>
        <strain>ATCC 700601 / ES114</strain>
    </source>
</reference>
<evidence type="ECO:0000255" key="1">
    <source>
        <dbReference type="HAMAP-Rule" id="MF_00489"/>
    </source>
</evidence>
<comment type="similarity">
    <text evidence="1">Belongs to the UPF0178 family.</text>
</comment>
<dbReference type="EMBL" id="CP000020">
    <property type="protein sequence ID" value="AAW85096.1"/>
    <property type="molecule type" value="Genomic_DNA"/>
</dbReference>
<dbReference type="RefSeq" id="WP_005417894.1">
    <property type="nucleotide sequence ID" value="NZ_CAWLES010000001.1"/>
</dbReference>
<dbReference type="RefSeq" id="YP_203984.1">
    <property type="nucleotide sequence ID" value="NC_006840.2"/>
</dbReference>
<dbReference type="SMR" id="Q5E7A0"/>
<dbReference type="STRING" id="312309.VF_0601"/>
<dbReference type="EnsemblBacteria" id="AAW85096">
    <property type="protein sequence ID" value="AAW85096"/>
    <property type="gene ID" value="VF_0601"/>
</dbReference>
<dbReference type="GeneID" id="54163254"/>
<dbReference type="KEGG" id="vfi:VF_0601"/>
<dbReference type="PATRIC" id="fig|312309.11.peg.593"/>
<dbReference type="eggNOG" id="COG1671">
    <property type="taxonomic scope" value="Bacteria"/>
</dbReference>
<dbReference type="HOGENOM" id="CLU_106619_2_1_6"/>
<dbReference type="OrthoDB" id="9798918at2"/>
<dbReference type="Proteomes" id="UP000000537">
    <property type="component" value="Chromosome I"/>
</dbReference>
<dbReference type="CDD" id="cd18720">
    <property type="entry name" value="PIN_YqxD-like"/>
    <property type="match status" value="1"/>
</dbReference>
<dbReference type="HAMAP" id="MF_00489">
    <property type="entry name" value="UPF0178"/>
    <property type="match status" value="1"/>
</dbReference>
<dbReference type="InterPro" id="IPR003791">
    <property type="entry name" value="UPF0178"/>
</dbReference>
<dbReference type="NCBIfam" id="NF001095">
    <property type="entry name" value="PRK00124.1"/>
    <property type="match status" value="1"/>
</dbReference>
<dbReference type="PANTHER" id="PTHR35146">
    <property type="entry name" value="UPF0178 PROTEIN YAII"/>
    <property type="match status" value="1"/>
</dbReference>
<dbReference type="PANTHER" id="PTHR35146:SF1">
    <property type="entry name" value="UPF0178 PROTEIN YAII"/>
    <property type="match status" value="1"/>
</dbReference>
<dbReference type="Pfam" id="PF02639">
    <property type="entry name" value="DUF188"/>
    <property type="match status" value="1"/>
</dbReference>
<gene>
    <name type="ordered locus">VF_0601</name>
</gene>
<feature type="chain" id="PRO_0000176020" description="UPF0178 protein VF_0601">
    <location>
        <begin position="1"/>
        <end position="149"/>
    </location>
</feature>
<sequence>MQIWVDADACPKVVKEVLFRAATRTGIQLTLVANHYIPVPSAANIRSMQVEAGFDVADDEIVKRSEAGDLVISADIPLAAELIEKKVQVLNPRGELYTEATIKARLNIRDFMDTMRASGIQTGGPAPLSQTERREFANQLDRILAKAKI</sequence>